<proteinExistence type="evidence at protein level"/>
<name>PIN7_ARATH</name>
<comment type="function">
    <text evidence="6 7 9">Acts as a component of the auxin efflux carrier (PubMed:14614497, PubMed:20439545). Mediates the initial auxin gradient which contributes to the establishment of the apical-basal axis in early embryogenesis (PubMed:14614497). Together with PIN3 and PIN4, involved in the connective auxin transport (CAT) that ensures communication across the shoot system, and modulates strigolactone-mediated shoot branching control (PubMed:30865619). The abcb19 pin3 pin4 pin7 quadruple mutant exhibits an additive phenotype on strigolactone-mediated bud outgrowth responses and shoot branching control (PubMed:30865619).</text>
</comment>
<comment type="subunit">
    <text evidence="1">Homodimer.</text>
</comment>
<comment type="subcellular location">
    <subcellularLocation>
        <location evidence="7">Cell membrane</location>
        <topology evidence="12">Multi-pass membrane protein</topology>
    </subcellularLocation>
</comment>
<comment type="alternative products">
    <event type="alternative splicing"/>
    <isoform>
        <id>Q940Y5-1</id>
        <name>1</name>
        <sequence type="displayed"/>
    </isoform>
    <isoform>
        <id>Q940Y5-2</id>
        <name>2</name>
        <sequence type="described" ref="VSP_009420 VSP_009421 VSP_009422"/>
    </isoform>
</comment>
<comment type="developmental stage">
    <text evidence="6">Expressed during early embryogenesis. Detected apically in the basal cell lineage resulting from the first zygotic division. At the 32-cell stage, localization shifts to the basal side of the cells in the developing embryo.</text>
</comment>
<comment type="induction">
    <text evidence="8">Down-regulated by endoplasmic reticulum stress treatment.</text>
</comment>
<comment type="disruption phenotype">
    <text evidence="6 9">Plants display altered embryo with defects in stereotypical pattern of early embryogenesis (PubMed:14614497). The triple mutant pin3 pin4 pin7 is able to suppress partially the highly branched phenotype of strigolactone deficient mutants lacking MAX2 and MAX4 (PubMed:30865619).</text>
</comment>
<comment type="miscellaneous">
    <molecule>Isoform 2</molecule>
    <text evidence="12">May be due to a competing donor splice site and to an intron retention.</text>
</comment>
<comment type="similarity">
    <text evidence="12">Belongs to the auxin efflux carrier (TC 2.A.69.1) family.</text>
</comment>
<comment type="sequence caution" evidence="12">
    <conflict type="erroneous gene model prediction">
        <sequence resource="EMBL-CDS" id="AAC00611"/>
    </conflict>
</comment>
<protein>
    <recommendedName>
        <fullName evidence="11">Auxin efflux carrier component 7</fullName>
        <shortName evidence="11">AtPIN7</shortName>
    </recommendedName>
</protein>
<keyword id="KW-0025">Alternative splicing</keyword>
<keyword id="KW-0927">Auxin signaling pathway</keyword>
<keyword id="KW-1003">Cell membrane</keyword>
<keyword id="KW-0472">Membrane</keyword>
<keyword id="KW-0597">Phosphoprotein</keyword>
<keyword id="KW-1185">Reference proteome</keyword>
<keyword id="KW-0812">Transmembrane</keyword>
<keyword id="KW-1133">Transmembrane helix</keyword>
<keyword id="KW-0813">Transport</keyword>
<organism>
    <name type="scientific">Arabidopsis thaliana</name>
    <name type="common">Mouse-ear cress</name>
    <dbReference type="NCBI Taxonomy" id="3702"/>
    <lineage>
        <taxon>Eukaryota</taxon>
        <taxon>Viridiplantae</taxon>
        <taxon>Streptophyta</taxon>
        <taxon>Embryophyta</taxon>
        <taxon>Tracheophyta</taxon>
        <taxon>Spermatophyta</taxon>
        <taxon>Magnoliopsida</taxon>
        <taxon>eudicotyledons</taxon>
        <taxon>Gunneridae</taxon>
        <taxon>Pentapetalae</taxon>
        <taxon>rosids</taxon>
        <taxon>malvids</taxon>
        <taxon>Brassicales</taxon>
        <taxon>Brassicaceae</taxon>
        <taxon>Camelineae</taxon>
        <taxon>Arabidopsis</taxon>
    </lineage>
</organism>
<sequence length="619" mass="67588">MITWHDLYTVLTAVIPLYVAMILAYGSVRWWKIFSPDQCSGINRFVAIFAVPLLSFHFISSNNPYAMNLRFIAADTLQKLIMLTLLIIWANFTRSGSLEWSITIFSLSTLPNTLVMGIPLLIAMYGEYSGSLMVQIVVLQCIIWYTLLLFLFEYRGAKILIMEQFPETGASIVSFKVESDVVSLDGHDFLETDAQIGDDGKLHVTVRKSNASRRSFYGGGGTNMTPRPSNLTGAEIYSLNTTPRGSNFNHSDFYSMMGFPGGRLSNFGPADMYSVQSSRGPTPRPSNFEESCAMASSPRFGYYPGGAPGSYPAPNPEFSTGNKTGSKAPKENHHHVGKSNSNDAKELHMFVWGSNGSPVSDRAGLQVDNGANEQVGKSDQGGAKEIRMLISDHTQNGENKAGPMNGDYGGEEESERVKEVPNGLHKLRCNSTAELNPKEAIETGETVPVKHMPPASVMTRLILIMVWRKLIRNPNTYSSLIGLIWALVAFRWDVAMPKIIQQSISILSDAGLGMAMFSLGLFMALQPKLIACGNSTATFAMAVRFFTGPAVMAVAAMAIGLRGDLLRVAIVQAALPQGIVPFVFAKEYNVHPAILSTGVIFGMLIALPITLVYYILLGL</sequence>
<reference key="1">
    <citation type="submission" date="1998-08" db="EMBL/GenBank/DDBJ databases">
        <title>PIN gene family in Arabidopsis thaliana.</title>
        <authorList>
            <person name="Friml J."/>
            <person name="Wisniewska J."/>
            <person name="Palme K."/>
        </authorList>
    </citation>
    <scope>NUCLEOTIDE SEQUENCE [MRNA] (ISOFORM 1)</scope>
</reference>
<reference key="2">
    <citation type="journal article" date="2000" name="Nature">
        <title>Sequence and analysis of chromosome 1 of the plant Arabidopsis thaliana.</title>
        <authorList>
            <person name="Theologis A."/>
            <person name="Ecker J.R."/>
            <person name="Palm C.J."/>
            <person name="Federspiel N.A."/>
            <person name="Kaul S."/>
            <person name="White O."/>
            <person name="Alonso J."/>
            <person name="Altafi H."/>
            <person name="Araujo R."/>
            <person name="Bowman C.L."/>
            <person name="Brooks S.Y."/>
            <person name="Buehler E."/>
            <person name="Chan A."/>
            <person name="Chao Q."/>
            <person name="Chen H."/>
            <person name="Cheuk R.F."/>
            <person name="Chin C.W."/>
            <person name="Chung M.K."/>
            <person name="Conn L."/>
            <person name="Conway A.B."/>
            <person name="Conway A.R."/>
            <person name="Creasy T.H."/>
            <person name="Dewar K."/>
            <person name="Dunn P."/>
            <person name="Etgu P."/>
            <person name="Feldblyum T.V."/>
            <person name="Feng J.-D."/>
            <person name="Fong B."/>
            <person name="Fujii C.Y."/>
            <person name="Gill J.E."/>
            <person name="Goldsmith A.D."/>
            <person name="Haas B."/>
            <person name="Hansen N.F."/>
            <person name="Hughes B."/>
            <person name="Huizar L."/>
            <person name="Hunter J.L."/>
            <person name="Jenkins J."/>
            <person name="Johnson-Hopson C."/>
            <person name="Khan S."/>
            <person name="Khaykin E."/>
            <person name="Kim C.J."/>
            <person name="Koo H.L."/>
            <person name="Kremenetskaia I."/>
            <person name="Kurtz D.B."/>
            <person name="Kwan A."/>
            <person name="Lam B."/>
            <person name="Langin-Hooper S."/>
            <person name="Lee A."/>
            <person name="Lee J.M."/>
            <person name="Lenz C.A."/>
            <person name="Li J.H."/>
            <person name="Li Y.-P."/>
            <person name="Lin X."/>
            <person name="Liu S.X."/>
            <person name="Liu Z.A."/>
            <person name="Luros J.S."/>
            <person name="Maiti R."/>
            <person name="Marziali A."/>
            <person name="Militscher J."/>
            <person name="Miranda M."/>
            <person name="Nguyen M."/>
            <person name="Nierman W.C."/>
            <person name="Osborne B.I."/>
            <person name="Pai G."/>
            <person name="Peterson J."/>
            <person name="Pham P.K."/>
            <person name="Rizzo M."/>
            <person name="Rooney T."/>
            <person name="Rowley D."/>
            <person name="Sakano H."/>
            <person name="Salzberg S.L."/>
            <person name="Schwartz J.R."/>
            <person name="Shinn P."/>
            <person name="Southwick A.M."/>
            <person name="Sun H."/>
            <person name="Tallon L.J."/>
            <person name="Tambunga G."/>
            <person name="Toriumi M.J."/>
            <person name="Town C.D."/>
            <person name="Utterback T."/>
            <person name="Van Aken S."/>
            <person name="Vaysberg M."/>
            <person name="Vysotskaia V.S."/>
            <person name="Walker M."/>
            <person name="Wu D."/>
            <person name="Yu G."/>
            <person name="Fraser C.M."/>
            <person name="Venter J.C."/>
            <person name="Davis R.W."/>
        </authorList>
    </citation>
    <scope>NUCLEOTIDE SEQUENCE [LARGE SCALE GENOMIC DNA]</scope>
    <source>
        <strain>cv. Columbia</strain>
    </source>
</reference>
<reference key="3">
    <citation type="journal article" date="2017" name="Plant J.">
        <title>Araport11: a complete reannotation of the Arabidopsis thaliana reference genome.</title>
        <authorList>
            <person name="Cheng C.Y."/>
            <person name="Krishnakumar V."/>
            <person name="Chan A.P."/>
            <person name="Thibaud-Nissen F."/>
            <person name="Schobel S."/>
            <person name="Town C.D."/>
        </authorList>
    </citation>
    <scope>GENOME REANNOTATION</scope>
    <source>
        <strain>cv. Columbia</strain>
    </source>
</reference>
<reference key="4">
    <citation type="journal article" date="2003" name="Science">
        <title>Empirical analysis of transcriptional activity in the Arabidopsis genome.</title>
        <authorList>
            <person name="Yamada K."/>
            <person name="Lim J."/>
            <person name="Dale J.M."/>
            <person name="Chen H."/>
            <person name="Shinn P."/>
            <person name="Palm C.J."/>
            <person name="Southwick A.M."/>
            <person name="Wu H.C."/>
            <person name="Kim C.J."/>
            <person name="Nguyen M."/>
            <person name="Pham P.K."/>
            <person name="Cheuk R.F."/>
            <person name="Karlin-Newmann G."/>
            <person name="Liu S.X."/>
            <person name="Lam B."/>
            <person name="Sakano H."/>
            <person name="Wu T."/>
            <person name="Yu G."/>
            <person name="Miranda M."/>
            <person name="Quach H.L."/>
            <person name="Tripp M."/>
            <person name="Chang C.H."/>
            <person name="Lee J.M."/>
            <person name="Toriumi M.J."/>
            <person name="Chan M.M."/>
            <person name="Tang C.C."/>
            <person name="Onodera C.S."/>
            <person name="Deng J.M."/>
            <person name="Akiyama K."/>
            <person name="Ansari Y."/>
            <person name="Arakawa T."/>
            <person name="Banh J."/>
            <person name="Banno F."/>
            <person name="Bowser L."/>
            <person name="Brooks S.Y."/>
            <person name="Carninci P."/>
            <person name="Chao Q."/>
            <person name="Choy N."/>
            <person name="Enju A."/>
            <person name="Goldsmith A.D."/>
            <person name="Gurjal M."/>
            <person name="Hansen N.F."/>
            <person name="Hayashizaki Y."/>
            <person name="Johnson-Hopson C."/>
            <person name="Hsuan V.W."/>
            <person name="Iida K."/>
            <person name="Karnes M."/>
            <person name="Khan S."/>
            <person name="Koesema E."/>
            <person name="Ishida J."/>
            <person name="Jiang P.X."/>
            <person name="Jones T."/>
            <person name="Kawai J."/>
            <person name="Kamiya A."/>
            <person name="Meyers C."/>
            <person name="Nakajima M."/>
            <person name="Narusaka M."/>
            <person name="Seki M."/>
            <person name="Sakurai T."/>
            <person name="Satou M."/>
            <person name="Tamse R."/>
            <person name="Vaysberg M."/>
            <person name="Wallender E.K."/>
            <person name="Wong C."/>
            <person name="Yamamura Y."/>
            <person name="Yuan S."/>
            <person name="Shinozaki K."/>
            <person name="Davis R.W."/>
            <person name="Theologis A."/>
            <person name="Ecker J.R."/>
        </authorList>
    </citation>
    <scope>NUCLEOTIDE SEQUENCE [LARGE SCALE MRNA] (ISOFORM 2)</scope>
    <source>
        <strain>cv. Columbia</strain>
    </source>
</reference>
<reference key="5">
    <citation type="journal article" date="2003" name="Nature">
        <title>Efflux-dependent auxin gradients establish the apical-basal axis of Arabidopsis.</title>
        <authorList>
            <person name="Friml J."/>
            <person name="Vieten A."/>
            <person name="Sauer M."/>
            <person name="Weijers D."/>
            <person name="Schwarz H."/>
            <person name="Hamann T."/>
            <person name="Offringa R."/>
            <person name="Juergens G."/>
        </authorList>
    </citation>
    <scope>FUNCTION</scope>
    <scope>DEVELOPMENTAL STAGE</scope>
    <scope>DISRUPTION PHENOTYPE</scope>
</reference>
<reference key="6">
    <citation type="journal article" date="2005" name="Trends Plant Sci.">
        <title>The PIN auxin efflux facilitators: evolutionary and functional perspectives.</title>
        <authorList>
            <person name="Paponov I.A."/>
            <person name="Teale W.D."/>
            <person name="Trebar M."/>
            <person name="Blilou I."/>
            <person name="Palme K."/>
        </authorList>
    </citation>
    <scope>GENE FAMILY</scope>
    <scope>NOMENCLATURE</scope>
</reference>
<reference key="7">
    <citation type="journal article" date="2009" name="Plant Physiol.">
        <title>Large-scale Arabidopsis phosphoproteome profiling reveals novel chloroplast kinase substrates and phosphorylation networks.</title>
        <authorList>
            <person name="Reiland S."/>
            <person name="Messerli G."/>
            <person name="Baerenfaller K."/>
            <person name="Gerrits B."/>
            <person name="Endler A."/>
            <person name="Grossmann J."/>
            <person name="Gruissem W."/>
            <person name="Baginsky S."/>
        </authorList>
    </citation>
    <scope>IDENTIFICATION BY MASS SPECTROMETRY [LARGE SCALE ANALYSIS]</scope>
</reference>
<reference key="8">
    <citation type="journal article" date="2010" name="Plant Physiol.">
        <title>Differential auxin-transporting activities of PIN-FORMED proteins in Arabidopsis root hair cells.</title>
        <authorList>
            <person name="Ganguly A."/>
            <person name="Lee S.H."/>
            <person name="Cho M."/>
            <person name="Lee O.R."/>
            <person name="Yoo H."/>
            <person name="Cho H.T."/>
        </authorList>
    </citation>
    <scope>SUBCELLULAR LOCATION</scope>
    <scope>FUNCTION</scope>
</reference>
<reference key="9">
    <citation type="journal article" date="2014" name="Plant J.">
        <title>Inter-regulation of the unfolded protein response and auxin signaling.</title>
        <authorList>
            <person name="Chen Y."/>
            <person name="Aung K."/>
            <person name="Rolcik J."/>
            <person name="Walicki K."/>
            <person name="Friml J."/>
            <person name="Brandizzi F."/>
        </authorList>
    </citation>
    <scope>INDUCTION</scope>
</reference>
<reference key="10">
    <citation type="journal article" date="2019" name="PLoS Genet.">
        <title>Connective auxin transport contributes to strigolactone-mediated shoot branching control independent of the transcription factor BRC1.</title>
        <authorList>
            <person name="van Rongen M."/>
            <person name="Bennett T."/>
            <person name="Ticchiarelli F."/>
            <person name="Leyser O."/>
        </authorList>
    </citation>
    <scope>FUNCTION</scope>
    <scope>DISRUPTION PHENOTYPE</scope>
    <source>
        <strain>cv. Columbia</strain>
    </source>
</reference>
<feature type="chain" id="PRO_0000123786" description="Auxin efflux carrier component 7">
    <location>
        <begin position="1"/>
        <end position="619"/>
    </location>
</feature>
<feature type="topological domain" description="Extracellular" evidence="12">
    <location>
        <begin position="1"/>
        <end position="7"/>
    </location>
</feature>
<feature type="transmembrane region" description="Helical; Name=1" evidence="4">
    <location>
        <begin position="8"/>
        <end position="28"/>
    </location>
</feature>
<feature type="topological domain" description="Cytoplasmic" evidence="12">
    <location>
        <begin position="29"/>
        <end position="38"/>
    </location>
</feature>
<feature type="transmembrane region" description="Helical; Name=2" evidence="4">
    <location>
        <begin position="39"/>
        <end position="59"/>
    </location>
</feature>
<feature type="topological domain" description="Extracellular" evidence="12">
    <location>
        <begin position="60"/>
        <end position="71"/>
    </location>
</feature>
<feature type="transmembrane region" description="Helical; Name=3" evidence="4">
    <location>
        <begin position="72"/>
        <end position="92"/>
    </location>
</feature>
<feature type="topological domain" description="Cytoplasmic" evidence="12">
    <location>
        <begin position="93"/>
        <end position="101"/>
    </location>
</feature>
<feature type="transmembrane region" description="Helical; Name=4" evidence="4">
    <location>
        <begin position="102"/>
        <end position="122"/>
    </location>
</feature>
<feature type="topological domain" description="Extracellular" evidence="12">
    <location>
        <begin position="123"/>
        <end position="131"/>
    </location>
</feature>
<feature type="transmembrane region" description="Helical; Name=5" evidence="4">
    <location>
        <begin position="132"/>
        <end position="152"/>
    </location>
</feature>
<feature type="topological domain" description="Cytoplasmic" evidence="12">
    <location>
        <begin position="153"/>
        <end position="479"/>
    </location>
</feature>
<feature type="transmembrane region" description="Helical; Name=6" evidence="4">
    <location>
        <begin position="480"/>
        <end position="500"/>
    </location>
</feature>
<feature type="topological domain" description="Extracellular" evidence="12">
    <location>
        <begin position="501"/>
        <end position="503"/>
    </location>
</feature>
<feature type="transmembrane region" description="Helical; Name=7" evidence="4">
    <location>
        <begin position="504"/>
        <end position="524"/>
    </location>
</feature>
<feature type="topological domain" description="Cytoplasmic" evidence="12">
    <location>
        <begin position="525"/>
        <end position="538"/>
    </location>
</feature>
<feature type="transmembrane region" description="Helical; Name=8" evidence="4">
    <location>
        <begin position="539"/>
        <end position="559"/>
    </location>
</feature>
<feature type="topological domain" description="Extracellular" evidence="12">
    <location>
        <begin position="560"/>
        <end position="564"/>
    </location>
</feature>
<feature type="transmembrane region" description="Helical; Name=9" evidence="4">
    <location>
        <begin position="565"/>
        <end position="585"/>
    </location>
</feature>
<feature type="topological domain" description="Cytoplasmic" evidence="12">
    <location>
        <begin position="586"/>
        <end position="598"/>
    </location>
</feature>
<feature type="transmembrane region" description="Helical; Name=10" evidence="4">
    <location>
        <begin position="599"/>
        <end position="619"/>
    </location>
</feature>
<feature type="region of interest" description="Disordered" evidence="5">
    <location>
        <begin position="306"/>
        <end position="340"/>
    </location>
</feature>
<feature type="region of interest" description="Disordered" evidence="5">
    <location>
        <begin position="393"/>
        <end position="413"/>
    </location>
</feature>
<feature type="binding site" evidence="2">
    <location>
        <position position="51"/>
    </location>
    <ligand>
        <name>(indol-3-yl)acetate</name>
        <dbReference type="ChEBI" id="CHEBI:30854"/>
    </ligand>
</feature>
<feature type="binding site" evidence="2">
    <location>
        <position position="112"/>
    </location>
    <ligand>
        <name>(indol-3-yl)acetate</name>
        <dbReference type="ChEBI" id="CHEBI:30854"/>
    </ligand>
</feature>
<feature type="binding site" evidence="2">
    <location>
        <position position="114"/>
    </location>
    <ligand>
        <name>(indol-3-yl)acetate</name>
        <dbReference type="ChEBI" id="CHEBI:30854"/>
    </ligand>
</feature>
<feature type="binding site" evidence="2">
    <location>
        <position position="145"/>
    </location>
    <ligand>
        <name>(indol-3-yl)acetate</name>
        <dbReference type="ChEBI" id="CHEBI:30854"/>
    </ligand>
</feature>
<feature type="binding site" evidence="2">
    <location>
        <position position="579"/>
    </location>
    <ligand>
        <name>(indol-3-yl)acetate</name>
        <dbReference type="ChEBI" id="CHEBI:30854"/>
    </ligand>
</feature>
<feature type="binding site" evidence="2">
    <location>
        <position position="580"/>
    </location>
    <ligand>
        <name>(indol-3-yl)acetate</name>
        <dbReference type="ChEBI" id="CHEBI:30854"/>
    </ligand>
</feature>
<feature type="modified residue" description="Phosphoserine" evidence="1">
    <location>
        <position position="229"/>
    </location>
</feature>
<feature type="modified residue" description="Phosphoserine" evidence="1">
    <location>
        <position position="246"/>
    </location>
</feature>
<feature type="modified residue" description="Phosphoserine" evidence="1">
    <location>
        <position position="286"/>
    </location>
</feature>
<feature type="modified residue" description="Phosphothreonine" evidence="1">
    <location>
        <position position="320"/>
    </location>
</feature>
<feature type="modified residue" description="Phosphoserine" evidence="3">
    <location>
        <position position="357"/>
    </location>
</feature>
<feature type="splice variant" id="VSP_009420" description="In isoform 2." evidence="10">
    <location>
        <begin position="397"/>
        <end position="400"/>
    </location>
</feature>
<feature type="splice variant" id="VSP_009421" description="In isoform 2." evidence="10">
    <original>LFMALQPKLIA</original>
    <variation>ESSFYSVSFFR</variation>
    <location>
        <begin position="521"/>
        <end position="531"/>
    </location>
</feature>
<feature type="splice variant" id="VSP_009422" description="In isoform 2." evidence="10">
    <location>
        <begin position="532"/>
        <end position="619"/>
    </location>
</feature>
<accession>Q940Y5</accession>
<accession>O49308</accession>
<accession>Q9SQH5</accession>
<gene>
    <name evidence="11" type="primary">PIN7</name>
    <name type="synonym">AEH1</name>
    <name type="ordered locus">At1g23080</name>
    <name type="ORF">T26J12.14</name>
</gene>
<evidence type="ECO:0000250" key="1">
    <source>
        <dbReference type="UniProtKB" id="Q9C6B8"/>
    </source>
</evidence>
<evidence type="ECO:0000250" key="2">
    <source>
        <dbReference type="UniProtKB" id="Q9LFP6"/>
    </source>
</evidence>
<evidence type="ECO:0000250" key="3">
    <source>
        <dbReference type="UniProtKB" id="Q9S7Z8"/>
    </source>
</evidence>
<evidence type="ECO:0000255" key="4"/>
<evidence type="ECO:0000256" key="5">
    <source>
        <dbReference type="SAM" id="MobiDB-lite"/>
    </source>
</evidence>
<evidence type="ECO:0000269" key="6">
    <source>
    </source>
</evidence>
<evidence type="ECO:0000269" key="7">
    <source>
    </source>
</evidence>
<evidence type="ECO:0000269" key="8">
    <source>
    </source>
</evidence>
<evidence type="ECO:0000269" key="9">
    <source>
    </source>
</evidence>
<evidence type="ECO:0000303" key="10">
    <source>
    </source>
</evidence>
<evidence type="ECO:0000303" key="11">
    <source>
    </source>
</evidence>
<evidence type="ECO:0000305" key="12"/>
<dbReference type="EMBL" id="AF087820">
    <property type="protein sequence ID" value="AAD52697.1"/>
    <property type="molecule type" value="mRNA"/>
</dbReference>
<dbReference type="EMBL" id="AC002311">
    <property type="protein sequence ID" value="AAC00611.1"/>
    <property type="status" value="ALT_SEQ"/>
    <property type="molecule type" value="Genomic_DNA"/>
</dbReference>
<dbReference type="EMBL" id="CP002684">
    <property type="protein sequence ID" value="AEE30332.1"/>
    <property type="molecule type" value="Genomic_DNA"/>
</dbReference>
<dbReference type="EMBL" id="CP002684">
    <property type="protein sequence ID" value="AEE30333.1"/>
    <property type="molecule type" value="Genomic_DNA"/>
</dbReference>
<dbReference type="EMBL" id="AY052356">
    <property type="protein sequence ID" value="AAK96547.1"/>
    <property type="molecule type" value="mRNA"/>
</dbReference>
<dbReference type="PIR" id="A86365">
    <property type="entry name" value="A86365"/>
</dbReference>
<dbReference type="RefSeq" id="NP_564189.1">
    <molecule id="Q940Y5-2"/>
    <property type="nucleotide sequence ID" value="NM_102156.1"/>
</dbReference>
<dbReference type="RefSeq" id="NP_849700.1">
    <molecule id="Q940Y5-1"/>
    <property type="nucleotide sequence ID" value="NM_179369.2"/>
</dbReference>
<dbReference type="SMR" id="Q940Y5"/>
<dbReference type="BioGRID" id="24155">
    <property type="interactions" value="21"/>
</dbReference>
<dbReference type="FunCoup" id="Q940Y5">
    <property type="interactions" value="1"/>
</dbReference>
<dbReference type="IntAct" id="Q940Y5">
    <property type="interactions" value="19"/>
</dbReference>
<dbReference type="STRING" id="3702.Q940Y5"/>
<dbReference type="TCDB" id="2.A.69.1.3">
    <property type="family name" value="the auxin efflux carrier (aec) family"/>
</dbReference>
<dbReference type="GlyCosmos" id="Q940Y5">
    <property type="glycosylation" value="2 sites, No reported glycans"/>
</dbReference>
<dbReference type="GlyGen" id="Q940Y5">
    <property type="glycosylation" value="1 site"/>
</dbReference>
<dbReference type="iPTMnet" id="Q940Y5"/>
<dbReference type="PaxDb" id="3702-AT1G23080.1"/>
<dbReference type="ProteomicsDB" id="236737">
    <molecule id="Q940Y5-1"/>
</dbReference>
<dbReference type="EnsemblPlants" id="AT1G23080.1">
    <molecule id="Q940Y5-1"/>
    <property type="protein sequence ID" value="AT1G23080.1"/>
    <property type="gene ID" value="AT1G23080"/>
</dbReference>
<dbReference type="EnsemblPlants" id="AT1G23080.2">
    <molecule id="Q940Y5-2"/>
    <property type="protein sequence ID" value="AT1G23080.2"/>
    <property type="gene ID" value="AT1G23080"/>
</dbReference>
<dbReference type="GeneID" id="838916"/>
<dbReference type="Gramene" id="AT1G23080.1">
    <molecule id="Q940Y5-1"/>
    <property type="protein sequence ID" value="AT1G23080.1"/>
    <property type="gene ID" value="AT1G23080"/>
</dbReference>
<dbReference type="Gramene" id="AT1G23080.2">
    <molecule id="Q940Y5-2"/>
    <property type="protein sequence ID" value="AT1G23080.2"/>
    <property type="gene ID" value="AT1G23080"/>
</dbReference>
<dbReference type="KEGG" id="ath:AT1G23080"/>
<dbReference type="Araport" id="AT1G23080"/>
<dbReference type="TAIR" id="AT1G23080">
    <property type="gene designation" value="PIN7"/>
</dbReference>
<dbReference type="eggNOG" id="ENOG502QRM7">
    <property type="taxonomic scope" value="Eukaryota"/>
</dbReference>
<dbReference type="InParanoid" id="Q940Y5"/>
<dbReference type="OrthoDB" id="1868374at2759"/>
<dbReference type="PhylomeDB" id="Q940Y5"/>
<dbReference type="PRO" id="PR:Q940Y5"/>
<dbReference type="Proteomes" id="UP000006548">
    <property type="component" value="Chromosome 1"/>
</dbReference>
<dbReference type="ExpressionAtlas" id="Q940Y5">
    <property type="expression patterns" value="baseline and differential"/>
</dbReference>
<dbReference type="GO" id="GO:0005634">
    <property type="term" value="C:nucleus"/>
    <property type="evidence" value="ECO:0007005"/>
    <property type="project" value="TAIR"/>
</dbReference>
<dbReference type="GO" id="GO:0005886">
    <property type="term" value="C:plasma membrane"/>
    <property type="evidence" value="ECO:0000314"/>
    <property type="project" value="TAIR"/>
</dbReference>
<dbReference type="GO" id="GO:0009506">
    <property type="term" value="C:plasmodesma"/>
    <property type="evidence" value="ECO:0007005"/>
    <property type="project" value="TAIR"/>
</dbReference>
<dbReference type="GO" id="GO:0010329">
    <property type="term" value="F:auxin efflux transmembrane transporter activity"/>
    <property type="evidence" value="ECO:0000314"/>
    <property type="project" value="TAIR"/>
</dbReference>
<dbReference type="GO" id="GO:0042802">
    <property type="term" value="F:identical protein binding"/>
    <property type="evidence" value="ECO:0000250"/>
    <property type="project" value="UniProtKB"/>
</dbReference>
<dbReference type="GO" id="GO:0042803">
    <property type="term" value="F:protein homodimerization activity"/>
    <property type="evidence" value="ECO:0000250"/>
    <property type="project" value="UniProtKB"/>
</dbReference>
<dbReference type="GO" id="GO:0009926">
    <property type="term" value="P:auxin polar transport"/>
    <property type="evidence" value="ECO:0000315"/>
    <property type="project" value="TAIR"/>
</dbReference>
<dbReference type="GO" id="GO:0009734">
    <property type="term" value="P:auxin-activated signaling pathway"/>
    <property type="evidence" value="ECO:0007669"/>
    <property type="project" value="UniProtKB-KW"/>
</dbReference>
<dbReference type="GO" id="GO:0009942">
    <property type="term" value="P:longitudinal axis specification"/>
    <property type="evidence" value="ECO:0000315"/>
    <property type="project" value="TAIR"/>
</dbReference>
<dbReference type="InterPro" id="IPR014024">
    <property type="entry name" value="Auxin_eff_plant"/>
</dbReference>
<dbReference type="InterPro" id="IPR051107">
    <property type="entry name" value="Auxin_Efflux_Carrier"/>
</dbReference>
<dbReference type="InterPro" id="IPR004776">
    <property type="entry name" value="Mem_transp_PIN-like"/>
</dbReference>
<dbReference type="NCBIfam" id="TIGR00946">
    <property type="entry name" value="2a69"/>
    <property type="match status" value="1"/>
</dbReference>
<dbReference type="PANTHER" id="PTHR31752">
    <property type="entry name" value="AUXIN EFFLUX CARRIER COMPONENT 1B-RELATED"/>
    <property type="match status" value="1"/>
</dbReference>
<dbReference type="PANTHER" id="PTHR31752:SF67">
    <property type="entry name" value="AUXIN EFFLUX CARRIER COMPONENT 7"/>
    <property type="match status" value="1"/>
</dbReference>
<dbReference type="Pfam" id="PF03547">
    <property type="entry name" value="Mem_trans"/>
    <property type="match status" value="1"/>
</dbReference>